<proteinExistence type="predicted"/>
<keyword id="KW-1185">Reference proteome</keyword>
<gene>
    <name type="ordered locus">HI_1508</name>
</gene>
<comment type="similarity">
    <text evidence="1">To phage Mu protein gp36.</text>
</comment>
<evidence type="ECO:0000305" key="1"/>
<dbReference type="EMBL" id="L42023">
    <property type="protein sequence ID" value="AAC23155.1"/>
    <property type="molecule type" value="Genomic_DNA"/>
</dbReference>
<dbReference type="PIR" id="F64033">
    <property type="entry name" value="F64033"/>
</dbReference>
<dbReference type="RefSeq" id="NP_439658.1">
    <property type="nucleotide sequence ID" value="NC_000907.1"/>
</dbReference>
<dbReference type="SMR" id="P44230"/>
<dbReference type="STRING" id="71421.HI_1508"/>
<dbReference type="EnsemblBacteria" id="AAC23155">
    <property type="protein sequence ID" value="AAC23155"/>
    <property type="gene ID" value="HI_1508"/>
</dbReference>
<dbReference type="KEGG" id="hin:HI_1508"/>
<dbReference type="PATRIC" id="fig|71421.8.peg.1578"/>
<dbReference type="eggNOG" id="COG4387">
    <property type="taxonomic scope" value="Bacteria"/>
</dbReference>
<dbReference type="HOGENOM" id="CLU_112375_1_0_6"/>
<dbReference type="OrthoDB" id="9812088at2"/>
<dbReference type="PhylomeDB" id="P44230"/>
<dbReference type="BioCyc" id="HINF71421:G1GJ1-1531-MONOMER"/>
<dbReference type="Proteomes" id="UP000000579">
    <property type="component" value="Chromosome"/>
</dbReference>
<dbReference type="InterPro" id="IPR009752">
    <property type="entry name" value="Phage_Mu_GpJ"/>
</dbReference>
<dbReference type="Pfam" id="PF07030">
    <property type="entry name" value="Phage_Mu_Gp36"/>
    <property type="match status" value="1"/>
</dbReference>
<protein>
    <recommendedName>
        <fullName>Mu-like prophage FluMu protein gp36</fullName>
    </recommendedName>
</protein>
<reference key="1">
    <citation type="journal article" date="1995" name="Science">
        <title>Whole-genome random sequencing and assembly of Haemophilus influenzae Rd.</title>
        <authorList>
            <person name="Fleischmann R.D."/>
            <person name="Adams M.D."/>
            <person name="White O."/>
            <person name="Clayton R.A."/>
            <person name="Kirkness E.F."/>
            <person name="Kerlavage A.R."/>
            <person name="Bult C.J."/>
            <person name="Tomb J.-F."/>
            <person name="Dougherty B.A."/>
            <person name="Merrick J.M."/>
            <person name="McKenney K."/>
            <person name="Sutton G.G."/>
            <person name="FitzHugh W."/>
            <person name="Fields C.A."/>
            <person name="Gocayne J.D."/>
            <person name="Scott J.D."/>
            <person name="Shirley R."/>
            <person name="Liu L.-I."/>
            <person name="Glodek A."/>
            <person name="Kelley J.M."/>
            <person name="Weidman J.F."/>
            <person name="Phillips C.A."/>
            <person name="Spriggs T."/>
            <person name="Hedblom E."/>
            <person name="Cotton M.D."/>
            <person name="Utterback T.R."/>
            <person name="Hanna M.C."/>
            <person name="Nguyen D.T."/>
            <person name="Saudek D.M."/>
            <person name="Brandon R.C."/>
            <person name="Fine L.D."/>
            <person name="Fritchman J.L."/>
            <person name="Fuhrmann J.L."/>
            <person name="Geoghagen N.S.M."/>
            <person name="Gnehm C.L."/>
            <person name="McDonald L.A."/>
            <person name="Small K.V."/>
            <person name="Fraser C.M."/>
            <person name="Smith H.O."/>
            <person name="Venter J.C."/>
        </authorList>
    </citation>
    <scope>NUCLEOTIDE SEQUENCE [LARGE SCALE GENOMIC DNA]</scope>
    <source>
        <strain>ATCC 51907 / DSM 11121 / KW20 / Rd</strain>
    </source>
</reference>
<name>VG36_HAEIN</name>
<sequence>MVLYANRESLIKRYTLKVLEQIAWLPEAQSLDEAKVQEALEDASQTIDSYLGGRYVLPLKTVPAVLERHCCYIARYFLEKNRATDQARQDYEDTIRFLEKVASGAISLGLSDDDETVESENGAMMESAGSVWGRNTSKGFI</sequence>
<accession>P44230</accession>
<organism>
    <name type="scientific">Haemophilus influenzae (strain ATCC 51907 / DSM 11121 / KW20 / Rd)</name>
    <dbReference type="NCBI Taxonomy" id="71421"/>
    <lineage>
        <taxon>Bacteria</taxon>
        <taxon>Pseudomonadati</taxon>
        <taxon>Pseudomonadota</taxon>
        <taxon>Gammaproteobacteria</taxon>
        <taxon>Pasteurellales</taxon>
        <taxon>Pasteurellaceae</taxon>
        <taxon>Haemophilus</taxon>
    </lineage>
</organism>
<feature type="chain" id="PRO_0000077829" description="Mu-like prophage FluMu protein gp36">
    <location>
        <begin position="1"/>
        <end position="141"/>
    </location>
</feature>